<sequence>MALNDFHVSEPYTLGIELEMQVINPPGYDLSQDSSTLIDAVKPQLTAGEIKHDITESMLEMATGVCRDIDQAAAQLSAMQHVILQAASEHHLGICGGGTHPFQKWQRQEVCDNERYQRTLENFGYLIQQATVFGQHVHVGCANGDDAIYLLHGLSHFVPHFIALSAASPYMQGADTRFACARLNIFSAFPDNGPMPWVSNWQEFTGLFRRLSYTTMIDSIKDLHWDIRPSPAFGTVEVRVMDTPLTLDHAINMAGLIQATAHWLLTERPFKPQEQDYLLYKFNRFQACRYGLEGVLTDAYTGDRRRLADDTLRLLDNVTPSARKLGADSAIDALRLQVKKGGNEAQYMREFIADGGSLIGLVQKHCEIWAGQ</sequence>
<reference key="1">
    <citation type="submission" date="2007-11" db="EMBL/GenBank/DDBJ databases">
        <authorList>
            <consortium name="The Salmonella enterica serovar Paratyphi B Genome Sequencing Project"/>
            <person name="McClelland M."/>
            <person name="Sanderson E.K."/>
            <person name="Porwollik S."/>
            <person name="Spieth J."/>
            <person name="Clifton W.S."/>
            <person name="Fulton R."/>
            <person name="Cordes M."/>
            <person name="Wollam A."/>
            <person name="Shah N."/>
            <person name="Pepin K."/>
            <person name="Bhonagiri V."/>
            <person name="Nash W."/>
            <person name="Johnson M."/>
            <person name="Thiruvilangam P."/>
            <person name="Wilson R."/>
        </authorList>
    </citation>
    <scope>NUCLEOTIDE SEQUENCE [LARGE SCALE GENOMIC DNA]</scope>
    <source>
        <strain>ATCC BAA-1250 / SPB7</strain>
    </source>
</reference>
<proteinExistence type="inferred from homology"/>
<keyword id="KW-0067">ATP-binding</keyword>
<keyword id="KW-0436">Ligase</keyword>
<keyword id="KW-0547">Nucleotide-binding</keyword>
<name>GCS2_SALPB</name>
<feature type="chain" id="PRO_1000088040" description="Putative glutamate--cysteine ligase 2">
    <location>
        <begin position="1"/>
        <end position="372"/>
    </location>
</feature>
<dbReference type="EC" id="6.3.2.2" evidence="1"/>
<dbReference type="EMBL" id="CP000886">
    <property type="protein sequence ID" value="ABX68345.1"/>
    <property type="molecule type" value="Genomic_DNA"/>
</dbReference>
<dbReference type="RefSeq" id="WP_001196905.1">
    <property type="nucleotide sequence ID" value="NC_010102.1"/>
</dbReference>
<dbReference type="SMR" id="A9MVD3"/>
<dbReference type="KEGG" id="spq:SPAB_02981"/>
<dbReference type="PATRIC" id="fig|1016998.12.peg.2812"/>
<dbReference type="HOGENOM" id="CLU_044848_1_1_6"/>
<dbReference type="BioCyc" id="SENT1016998:SPAB_RS12155-MONOMER"/>
<dbReference type="Proteomes" id="UP000008556">
    <property type="component" value="Chromosome"/>
</dbReference>
<dbReference type="GO" id="GO:0005524">
    <property type="term" value="F:ATP binding"/>
    <property type="evidence" value="ECO:0007669"/>
    <property type="project" value="UniProtKB-KW"/>
</dbReference>
<dbReference type="GO" id="GO:0004357">
    <property type="term" value="F:glutamate-cysteine ligase activity"/>
    <property type="evidence" value="ECO:0007669"/>
    <property type="project" value="UniProtKB-EC"/>
</dbReference>
<dbReference type="GO" id="GO:0042398">
    <property type="term" value="P:modified amino acid biosynthetic process"/>
    <property type="evidence" value="ECO:0007669"/>
    <property type="project" value="InterPro"/>
</dbReference>
<dbReference type="FunFam" id="3.30.590.20:FF:000002">
    <property type="entry name" value="Putative glutamate--cysteine ligase 2"/>
    <property type="match status" value="1"/>
</dbReference>
<dbReference type="Gene3D" id="3.30.590.20">
    <property type="match status" value="1"/>
</dbReference>
<dbReference type="HAMAP" id="MF_01609">
    <property type="entry name" value="Glu_cys_ligase_2"/>
    <property type="match status" value="1"/>
</dbReference>
<dbReference type="InterPro" id="IPR050141">
    <property type="entry name" value="GCL_type2/YbdK_subfam"/>
</dbReference>
<dbReference type="InterPro" id="IPR006336">
    <property type="entry name" value="GCS2"/>
</dbReference>
<dbReference type="InterPro" id="IPR014746">
    <property type="entry name" value="Gln_synth/guanido_kin_cat_dom"/>
</dbReference>
<dbReference type="InterPro" id="IPR011793">
    <property type="entry name" value="YbdK"/>
</dbReference>
<dbReference type="NCBIfam" id="TIGR02050">
    <property type="entry name" value="gshA_cyan_rel"/>
    <property type="match status" value="1"/>
</dbReference>
<dbReference type="NCBIfam" id="NF010040">
    <property type="entry name" value="PRK13516.1"/>
    <property type="match status" value="1"/>
</dbReference>
<dbReference type="PANTHER" id="PTHR36510">
    <property type="entry name" value="GLUTAMATE--CYSTEINE LIGASE 2-RELATED"/>
    <property type="match status" value="1"/>
</dbReference>
<dbReference type="PANTHER" id="PTHR36510:SF1">
    <property type="entry name" value="GLUTAMATE--CYSTEINE LIGASE 2-RELATED"/>
    <property type="match status" value="1"/>
</dbReference>
<dbReference type="Pfam" id="PF04107">
    <property type="entry name" value="GCS2"/>
    <property type="match status" value="1"/>
</dbReference>
<dbReference type="SUPFAM" id="SSF55931">
    <property type="entry name" value="Glutamine synthetase/guanido kinase"/>
    <property type="match status" value="1"/>
</dbReference>
<evidence type="ECO:0000255" key="1">
    <source>
        <dbReference type="HAMAP-Rule" id="MF_01609"/>
    </source>
</evidence>
<protein>
    <recommendedName>
        <fullName evidence="1">Putative glutamate--cysteine ligase 2</fullName>
        <ecNumber evidence="1">6.3.2.2</ecNumber>
    </recommendedName>
    <alternativeName>
        <fullName evidence="1">Gamma-glutamylcysteine synthetase 2</fullName>
        <shortName evidence="1">GCS 2</shortName>
        <shortName evidence="1">Gamma-GCS 2</shortName>
    </alternativeName>
</protein>
<gene>
    <name type="primary">ybdK</name>
    <name type="ordered locus">SPAB_02981</name>
</gene>
<organism>
    <name type="scientific">Salmonella paratyphi B (strain ATCC BAA-1250 / SPB7)</name>
    <dbReference type="NCBI Taxonomy" id="1016998"/>
    <lineage>
        <taxon>Bacteria</taxon>
        <taxon>Pseudomonadati</taxon>
        <taxon>Pseudomonadota</taxon>
        <taxon>Gammaproteobacteria</taxon>
        <taxon>Enterobacterales</taxon>
        <taxon>Enterobacteriaceae</taxon>
        <taxon>Salmonella</taxon>
    </lineage>
</organism>
<accession>A9MVD3</accession>
<comment type="function">
    <text evidence="1">ATP-dependent carboxylate-amine ligase which exhibits weak glutamate--cysteine ligase activity.</text>
</comment>
<comment type="catalytic activity">
    <reaction evidence="1">
        <text>L-cysteine + L-glutamate + ATP = gamma-L-glutamyl-L-cysteine + ADP + phosphate + H(+)</text>
        <dbReference type="Rhea" id="RHEA:13285"/>
        <dbReference type="ChEBI" id="CHEBI:15378"/>
        <dbReference type="ChEBI" id="CHEBI:29985"/>
        <dbReference type="ChEBI" id="CHEBI:30616"/>
        <dbReference type="ChEBI" id="CHEBI:35235"/>
        <dbReference type="ChEBI" id="CHEBI:43474"/>
        <dbReference type="ChEBI" id="CHEBI:58173"/>
        <dbReference type="ChEBI" id="CHEBI:456216"/>
        <dbReference type="EC" id="6.3.2.2"/>
    </reaction>
</comment>
<comment type="subunit">
    <text evidence="1">Homodimer.</text>
</comment>
<comment type="similarity">
    <text evidence="1">Belongs to the glutamate--cysteine ligase type 2 family. YbdK subfamily.</text>
</comment>